<reference key="1">
    <citation type="journal article" date="2005" name="J. Bacteriol.">
        <title>Insights on evolution of virulence and resistance from the complete genome analysis of an early methicillin-resistant Staphylococcus aureus strain and a biofilm-producing methicillin-resistant Staphylococcus epidermidis strain.</title>
        <authorList>
            <person name="Gill S.R."/>
            <person name="Fouts D.E."/>
            <person name="Archer G.L."/>
            <person name="Mongodin E.F."/>
            <person name="DeBoy R.T."/>
            <person name="Ravel J."/>
            <person name="Paulsen I.T."/>
            <person name="Kolonay J.F."/>
            <person name="Brinkac L.M."/>
            <person name="Beanan M.J."/>
            <person name="Dodson R.J."/>
            <person name="Daugherty S.C."/>
            <person name="Madupu R."/>
            <person name="Angiuoli S.V."/>
            <person name="Durkin A.S."/>
            <person name="Haft D.H."/>
            <person name="Vamathevan J.J."/>
            <person name="Khouri H."/>
            <person name="Utterback T.R."/>
            <person name="Lee C."/>
            <person name="Dimitrov G."/>
            <person name="Jiang L."/>
            <person name="Qin H."/>
            <person name="Weidman J."/>
            <person name="Tran K."/>
            <person name="Kang K.H."/>
            <person name="Hance I.R."/>
            <person name="Nelson K.E."/>
            <person name="Fraser C.M."/>
        </authorList>
    </citation>
    <scope>NUCLEOTIDE SEQUENCE [LARGE SCALE GENOMIC DNA]</scope>
    <source>
        <strain>ATCC 35984 / DSM 28319 / BCRC 17069 / CCUG 31568 / BM 3577 / RP62A</strain>
    </source>
</reference>
<comment type="function">
    <text evidence="1">3'-5' exonuclease.</text>
</comment>
<comment type="similarity">
    <text evidence="1">Belongs to the helicase family. DinG subfamily. Type 2 sub-subfamily.</text>
</comment>
<gene>
    <name evidence="1" type="primary">dinG</name>
    <name type="ordered locus">SERP1025</name>
</gene>
<keyword id="KW-0067">ATP-binding</keyword>
<keyword id="KW-0269">Exonuclease</keyword>
<keyword id="KW-0378">Hydrolase</keyword>
<keyword id="KW-0540">Nuclease</keyword>
<keyword id="KW-0547">Nucleotide-binding</keyword>
<keyword id="KW-1185">Reference proteome</keyword>
<proteinExistence type="inferred from homology"/>
<sequence length="902" mass="105327">MGIATFAVVDLETTGNQLDYDEIIQIGITFVRQNQVIDTYHSMIRTDLEIPPFIQALTSIEEEMLVQAPYFNEVADDIYQLIKDCVFVAHNISFDLNFIKKAFEKCNIQFKPKRVMDTLELFKIAFPTDKSYQLSALAESHHIPLNNAHRADEDATTTAKLMIKAFEKFEQLHLDTQKQLYYLSKNLKYDLYHILFEMVRNYQTKPPNNQFEQFEQIIYRKQIDLKKPAVNFDGTLKDLYKNVTQSLNLTYRPQQLYLAEIILDQLMHSDKAMIEAPLGSGKSLAYLLAATMYNIETGRHVMISTNTKLLQSQLLEKDIPLLNDVLDFKINASLIKSKNDYISLGLISQILKDDTNNYEVSILKMQLLIWITETNTGDIQELNLKGGQKMYVDQKIETYVPVRHDIHYYNYIKRNAQNIQIGITNHAHLIHSDSENTIYQLFDDCIIDEAHRLPDYALNQVTNDLNYSDVKYQLGLIGKNENEKLLKAVDKLEQQRILEKLDIAPIDVFGLKININELHDLNEQLFTTIYNIIQTSDVYDDDIHKYHYVYDFETGEILKDLRAIIDKLNKTIEIFNGMNHKTIKSVRKQLLYLHDKFKLIEQSIKDHHTSFISIKNLAQKSTIRLLVKDYDVKDILTKQVLEKFKSLTFISGTLTFNHSFKAFQNWFNEDIDFNTFEISTPLTSSNHTNVFVPNDVETYNYKNLDDYVASIVDYIVEYITVTQSKCLVLFTSYKMMHMVQDLLNELPELEDYVILTQQQNQNYKIVQQFNNFDKSILLGTSTFFEGFDFQANGLKCVMIAKLPFMNKHNIKYWLMDSEFTSTFKDYVLPDAVTRFRQGLGRLIRHEDDKGLIVSFDDRLVNSTYKSFFAQSLEHFKQRKGNIKQFNKLLNQIQRSIDNESKS</sequence>
<organism>
    <name type="scientific">Staphylococcus epidermidis (strain ATCC 35984 / DSM 28319 / BCRC 17069 / CCUG 31568 / BM 3577 / RP62A)</name>
    <dbReference type="NCBI Taxonomy" id="176279"/>
    <lineage>
        <taxon>Bacteria</taxon>
        <taxon>Bacillati</taxon>
        <taxon>Bacillota</taxon>
        <taxon>Bacilli</taxon>
        <taxon>Bacillales</taxon>
        <taxon>Staphylococcaceae</taxon>
        <taxon>Staphylococcus</taxon>
    </lineage>
</organism>
<protein>
    <recommendedName>
        <fullName evidence="1">3'-5' exonuclease DinG</fullName>
        <ecNumber evidence="1">3.1.-.-</ecNumber>
    </recommendedName>
</protein>
<name>DING_STAEQ</name>
<feature type="chain" id="PRO_0000277601" description="3'-5' exonuclease DinG">
    <location>
        <begin position="1"/>
        <end position="902"/>
    </location>
</feature>
<feature type="domain" description="Exonuclease" evidence="1">
    <location>
        <begin position="8"/>
        <end position="161"/>
    </location>
</feature>
<feature type="domain" description="Helicase ATP-binding" evidence="1">
    <location>
        <begin position="241"/>
        <end position="496"/>
    </location>
</feature>
<feature type="domain" description="Helicase C-terminal" evidence="1">
    <location>
        <begin position="714"/>
        <end position="883"/>
    </location>
</feature>
<feature type="short sequence motif" description="DEAH box" evidence="1">
    <location>
        <begin position="448"/>
        <end position="451"/>
    </location>
</feature>
<feature type="binding site" evidence="1">
    <location>
        <begin position="276"/>
        <end position="283"/>
    </location>
    <ligand>
        <name>ATP</name>
        <dbReference type="ChEBI" id="CHEBI:30616"/>
    </ligand>
</feature>
<dbReference type="EC" id="3.1.-.-" evidence="1"/>
<dbReference type="EMBL" id="CP000029">
    <property type="protein sequence ID" value="AAW54401.1"/>
    <property type="molecule type" value="Genomic_DNA"/>
</dbReference>
<dbReference type="RefSeq" id="WP_001831318.1">
    <property type="nucleotide sequence ID" value="NC_002976.3"/>
</dbReference>
<dbReference type="SMR" id="Q5HP88"/>
<dbReference type="STRING" id="176279.SERP1025"/>
<dbReference type="KEGG" id="ser:SERP1025"/>
<dbReference type="eggNOG" id="COG0847">
    <property type="taxonomic scope" value="Bacteria"/>
</dbReference>
<dbReference type="eggNOG" id="COG1199">
    <property type="taxonomic scope" value="Bacteria"/>
</dbReference>
<dbReference type="HOGENOM" id="CLU_012117_1_1_9"/>
<dbReference type="Proteomes" id="UP000000531">
    <property type="component" value="Chromosome"/>
</dbReference>
<dbReference type="GO" id="GO:0005829">
    <property type="term" value="C:cytosol"/>
    <property type="evidence" value="ECO:0007669"/>
    <property type="project" value="TreeGrafter"/>
</dbReference>
<dbReference type="GO" id="GO:0008408">
    <property type="term" value="F:3'-5' exonuclease activity"/>
    <property type="evidence" value="ECO:0007669"/>
    <property type="project" value="UniProtKB-UniRule"/>
</dbReference>
<dbReference type="GO" id="GO:0005524">
    <property type="term" value="F:ATP binding"/>
    <property type="evidence" value="ECO:0007669"/>
    <property type="project" value="UniProtKB-UniRule"/>
</dbReference>
<dbReference type="GO" id="GO:0003677">
    <property type="term" value="F:DNA binding"/>
    <property type="evidence" value="ECO:0007669"/>
    <property type="project" value="InterPro"/>
</dbReference>
<dbReference type="GO" id="GO:0003887">
    <property type="term" value="F:DNA-directed DNA polymerase activity"/>
    <property type="evidence" value="ECO:0007669"/>
    <property type="project" value="InterPro"/>
</dbReference>
<dbReference type="GO" id="GO:0004386">
    <property type="term" value="F:helicase activity"/>
    <property type="evidence" value="ECO:0007669"/>
    <property type="project" value="InterPro"/>
</dbReference>
<dbReference type="GO" id="GO:0016818">
    <property type="term" value="F:hydrolase activity, acting on acid anhydrides, in phosphorus-containing anhydrides"/>
    <property type="evidence" value="ECO:0007669"/>
    <property type="project" value="InterPro"/>
</dbReference>
<dbReference type="GO" id="GO:0045004">
    <property type="term" value="P:DNA replication proofreading"/>
    <property type="evidence" value="ECO:0007669"/>
    <property type="project" value="TreeGrafter"/>
</dbReference>
<dbReference type="CDD" id="cd06127">
    <property type="entry name" value="DEDDh"/>
    <property type="match status" value="1"/>
</dbReference>
<dbReference type="FunFam" id="3.30.420.10:FF:000045">
    <property type="entry name" value="3'-5' exonuclease DinG"/>
    <property type="match status" value="1"/>
</dbReference>
<dbReference type="Gene3D" id="3.40.50.300">
    <property type="entry name" value="P-loop containing nucleotide triphosphate hydrolases"/>
    <property type="match status" value="2"/>
</dbReference>
<dbReference type="Gene3D" id="3.30.420.10">
    <property type="entry name" value="Ribonuclease H-like superfamily/Ribonuclease H"/>
    <property type="match status" value="1"/>
</dbReference>
<dbReference type="HAMAP" id="MF_02206">
    <property type="entry name" value="DinG_exonucl"/>
    <property type="match status" value="1"/>
</dbReference>
<dbReference type="InterPro" id="IPR006555">
    <property type="entry name" value="ATP-dep_Helicase_C"/>
</dbReference>
<dbReference type="InterPro" id="IPR006310">
    <property type="entry name" value="DinG"/>
</dbReference>
<dbReference type="InterPro" id="IPR006054">
    <property type="entry name" value="DnaQ"/>
</dbReference>
<dbReference type="InterPro" id="IPR013520">
    <property type="entry name" value="Exonuclease_RNaseT/DNA_pol3"/>
</dbReference>
<dbReference type="InterPro" id="IPR014013">
    <property type="entry name" value="Helic_SF1/SF2_ATP-bd_DinG/Rad3"/>
</dbReference>
<dbReference type="InterPro" id="IPR027417">
    <property type="entry name" value="P-loop_NTPase"/>
</dbReference>
<dbReference type="InterPro" id="IPR012337">
    <property type="entry name" value="RNaseH-like_sf"/>
</dbReference>
<dbReference type="InterPro" id="IPR036397">
    <property type="entry name" value="RNaseH_sf"/>
</dbReference>
<dbReference type="NCBIfam" id="TIGR01407">
    <property type="entry name" value="dinG_rel"/>
    <property type="match status" value="1"/>
</dbReference>
<dbReference type="NCBIfam" id="TIGR00573">
    <property type="entry name" value="dnaq"/>
    <property type="match status" value="1"/>
</dbReference>
<dbReference type="PANTHER" id="PTHR30231">
    <property type="entry name" value="DNA POLYMERASE III SUBUNIT EPSILON"/>
    <property type="match status" value="1"/>
</dbReference>
<dbReference type="PANTHER" id="PTHR30231:SF41">
    <property type="entry name" value="DNA POLYMERASE III SUBUNIT EPSILON"/>
    <property type="match status" value="1"/>
</dbReference>
<dbReference type="Pfam" id="PF13307">
    <property type="entry name" value="Helicase_C_2"/>
    <property type="match status" value="1"/>
</dbReference>
<dbReference type="Pfam" id="PF00929">
    <property type="entry name" value="RNase_T"/>
    <property type="match status" value="1"/>
</dbReference>
<dbReference type="SMART" id="SM00479">
    <property type="entry name" value="EXOIII"/>
    <property type="match status" value="1"/>
</dbReference>
<dbReference type="SMART" id="SM00491">
    <property type="entry name" value="HELICc2"/>
    <property type="match status" value="1"/>
</dbReference>
<dbReference type="SUPFAM" id="SSF52540">
    <property type="entry name" value="P-loop containing nucleoside triphosphate hydrolases"/>
    <property type="match status" value="1"/>
</dbReference>
<dbReference type="SUPFAM" id="SSF53098">
    <property type="entry name" value="Ribonuclease H-like"/>
    <property type="match status" value="1"/>
</dbReference>
<dbReference type="PROSITE" id="PS51193">
    <property type="entry name" value="HELICASE_ATP_BIND_2"/>
    <property type="match status" value="1"/>
</dbReference>
<dbReference type="PROSITE" id="PS51194">
    <property type="entry name" value="HELICASE_CTER"/>
    <property type="match status" value="1"/>
</dbReference>
<evidence type="ECO:0000255" key="1">
    <source>
        <dbReference type="HAMAP-Rule" id="MF_02206"/>
    </source>
</evidence>
<accession>Q5HP88</accession>